<name>EF1B_CALMQ</name>
<gene>
    <name evidence="1" type="primary">ef1b</name>
    <name type="ordered locus">Cmaq_0542</name>
</gene>
<comment type="function">
    <text evidence="1">Promotes the exchange of GDP for GTP in EF-1-alpha/GDP, thus allowing the regeneration of EF-1-alpha/GTP that could then be used to form the ternary complex EF-1-alpha/GTP/AAtRNA.</text>
</comment>
<comment type="similarity">
    <text evidence="1">Belongs to the EF-1-beta/EF-1-delta family.</text>
</comment>
<sequence>MAQIYYVYRVTPSREDVDYEKLKQVIKGKLEPKYPVKGIEEEEIGFGIKALKIHIVTPESDEYTSDEIENILSQIEDIGGIELEYFTRVSF</sequence>
<accession>A8MC80</accession>
<feature type="chain" id="PRO_0000366418" description="Elongation factor 1-beta">
    <location>
        <begin position="1"/>
        <end position="91"/>
    </location>
</feature>
<proteinExistence type="inferred from homology"/>
<reference key="1">
    <citation type="submission" date="2007-10" db="EMBL/GenBank/DDBJ databases">
        <title>Complete sequence of Caldivirga maquilingensis IC-167.</title>
        <authorList>
            <consortium name="US DOE Joint Genome Institute"/>
            <person name="Copeland A."/>
            <person name="Lucas S."/>
            <person name="Lapidus A."/>
            <person name="Barry K."/>
            <person name="Glavina del Rio T."/>
            <person name="Dalin E."/>
            <person name="Tice H."/>
            <person name="Pitluck S."/>
            <person name="Saunders E."/>
            <person name="Brettin T."/>
            <person name="Bruce D."/>
            <person name="Detter J.C."/>
            <person name="Han C."/>
            <person name="Schmutz J."/>
            <person name="Larimer F."/>
            <person name="Land M."/>
            <person name="Hauser L."/>
            <person name="Kyrpides N."/>
            <person name="Ivanova N."/>
            <person name="Biddle J.F."/>
            <person name="Zhang Z."/>
            <person name="Fitz-Gibbon S.T."/>
            <person name="Lowe T.M."/>
            <person name="Saltikov C."/>
            <person name="House C.H."/>
            <person name="Richardson P."/>
        </authorList>
    </citation>
    <scope>NUCLEOTIDE SEQUENCE [LARGE SCALE GENOMIC DNA]</scope>
    <source>
        <strain>ATCC 700844 / DSM 13496 / JCM 10307 / IC-167</strain>
    </source>
</reference>
<evidence type="ECO:0000255" key="1">
    <source>
        <dbReference type="HAMAP-Rule" id="MF_00043"/>
    </source>
</evidence>
<dbReference type="EMBL" id="CP000852">
    <property type="protein sequence ID" value="ABW01386.1"/>
    <property type="molecule type" value="Genomic_DNA"/>
</dbReference>
<dbReference type="RefSeq" id="WP_012185606.1">
    <property type="nucleotide sequence ID" value="NC_009954.1"/>
</dbReference>
<dbReference type="SMR" id="A8MC80"/>
<dbReference type="STRING" id="397948.Cmaq_0542"/>
<dbReference type="GeneID" id="5710309"/>
<dbReference type="KEGG" id="cma:Cmaq_0542"/>
<dbReference type="eggNOG" id="arCOG01988">
    <property type="taxonomic scope" value="Archaea"/>
</dbReference>
<dbReference type="HOGENOM" id="CLU_165896_1_0_2"/>
<dbReference type="OrthoDB" id="84643at2157"/>
<dbReference type="Proteomes" id="UP000001137">
    <property type="component" value="Chromosome"/>
</dbReference>
<dbReference type="GO" id="GO:0003746">
    <property type="term" value="F:translation elongation factor activity"/>
    <property type="evidence" value="ECO:0007669"/>
    <property type="project" value="UniProtKB-UniRule"/>
</dbReference>
<dbReference type="CDD" id="cd00292">
    <property type="entry name" value="EF1B"/>
    <property type="match status" value="1"/>
</dbReference>
<dbReference type="Gene3D" id="3.30.70.60">
    <property type="match status" value="1"/>
</dbReference>
<dbReference type="HAMAP" id="MF_00043">
    <property type="entry name" value="EF1_beta"/>
    <property type="match status" value="1"/>
</dbReference>
<dbReference type="InterPro" id="IPR036219">
    <property type="entry name" value="eEF-1beta-like_sf"/>
</dbReference>
<dbReference type="InterPro" id="IPR014038">
    <property type="entry name" value="EF1B_bsu/dsu_GNE"/>
</dbReference>
<dbReference type="InterPro" id="IPR014717">
    <property type="entry name" value="Transl_elong_EF1B/ribsomal_bS6"/>
</dbReference>
<dbReference type="InterPro" id="IPR004542">
    <property type="entry name" value="Transl_elong_EF1B_B_arc"/>
</dbReference>
<dbReference type="NCBIfam" id="NF001670">
    <property type="entry name" value="PRK00435.1"/>
    <property type="match status" value="1"/>
</dbReference>
<dbReference type="PANTHER" id="PTHR39647">
    <property type="entry name" value="ELONGATION FACTOR 1-BETA"/>
    <property type="match status" value="1"/>
</dbReference>
<dbReference type="PANTHER" id="PTHR39647:SF1">
    <property type="entry name" value="ELONGATION FACTOR 1-BETA"/>
    <property type="match status" value="1"/>
</dbReference>
<dbReference type="Pfam" id="PF00736">
    <property type="entry name" value="EF1_GNE"/>
    <property type="match status" value="1"/>
</dbReference>
<dbReference type="SMART" id="SM00888">
    <property type="entry name" value="EF1_GNE"/>
    <property type="match status" value="1"/>
</dbReference>
<dbReference type="SUPFAM" id="SSF54984">
    <property type="entry name" value="eEF-1beta-like"/>
    <property type="match status" value="1"/>
</dbReference>
<keyword id="KW-0251">Elongation factor</keyword>
<keyword id="KW-0648">Protein biosynthesis</keyword>
<keyword id="KW-1185">Reference proteome</keyword>
<protein>
    <recommendedName>
        <fullName evidence="1">Elongation factor 1-beta</fullName>
        <shortName evidence="1">EF-1-beta</shortName>
    </recommendedName>
    <alternativeName>
        <fullName evidence="1">aEF-1beta</fullName>
    </alternativeName>
</protein>
<organism>
    <name type="scientific">Caldivirga maquilingensis (strain ATCC 700844 / DSM 13496 / JCM 10307 / IC-167)</name>
    <dbReference type="NCBI Taxonomy" id="397948"/>
    <lineage>
        <taxon>Archaea</taxon>
        <taxon>Thermoproteota</taxon>
        <taxon>Thermoprotei</taxon>
        <taxon>Thermoproteales</taxon>
        <taxon>Thermoproteaceae</taxon>
        <taxon>Caldivirga</taxon>
    </lineage>
</organism>